<evidence type="ECO:0000255" key="1"/>
<evidence type="ECO:0000305" key="2"/>
<evidence type="ECO:0007829" key="3">
    <source>
        <dbReference type="PDB" id="1NKV"/>
    </source>
</evidence>
<comment type="subcellular location">
    <subcellularLocation>
        <location evidence="2">Membrane</location>
        <topology evidence="2">Single-pass membrane protein</topology>
    </subcellularLocation>
</comment>
<sequence>MDIPRIFTISESEHRIHNPFTEEKYATLGRVLRMKPGTRILDLGSGSGEMLCTWARDHGITGTGIDMSSLFTAQAKRRAEELGVSERVHFIHNDAAGYVANEKCDVAACVGATWIAGGFAGAEELLAQSLKPGGIMLIGEPYWRQLPATEEIAQACGVSSTSDFLTLPGLVGAFDDLGYDVVEMVLADQEGWDRYEAAKWLTMRRWLEANPDDDFAAEVRAELNIAPKRYVTYARECFGWGVFALIAR</sequence>
<keyword id="KW-0002">3D-structure</keyword>
<keyword id="KW-0472">Membrane</keyword>
<keyword id="KW-1185">Reference proteome</keyword>
<keyword id="KW-0812">Transmembrane</keyword>
<keyword id="KW-1133">Transmembrane helix</keyword>
<dbReference type="EMBL" id="U14003">
    <property type="protein sequence ID" value="AAA97202.1"/>
    <property type="molecule type" value="Genomic_DNA"/>
</dbReference>
<dbReference type="EMBL" id="U00096">
    <property type="protein sequence ID" value="AAC77262.1"/>
    <property type="molecule type" value="Genomic_DNA"/>
</dbReference>
<dbReference type="EMBL" id="AP009048">
    <property type="protein sequence ID" value="BAE78298.1"/>
    <property type="molecule type" value="Genomic_DNA"/>
</dbReference>
<dbReference type="PIR" id="S56531">
    <property type="entry name" value="S56531"/>
</dbReference>
<dbReference type="RefSeq" id="NP_418726.1">
    <property type="nucleotide sequence ID" value="NC_000913.3"/>
</dbReference>
<dbReference type="RefSeq" id="WP_000354251.1">
    <property type="nucleotide sequence ID" value="NZ_SSUV01000012.1"/>
</dbReference>
<dbReference type="PDB" id="1NKV">
    <property type="method" value="X-ray"/>
    <property type="resolution" value="2.90 A"/>
    <property type="chains" value="A/B/C=1-248"/>
</dbReference>
<dbReference type="PDBsum" id="1NKV"/>
<dbReference type="SMR" id="P39367"/>
<dbReference type="BioGRID" id="4262744">
    <property type="interactions" value="110"/>
</dbReference>
<dbReference type="BioGRID" id="851192">
    <property type="interactions" value="2"/>
</dbReference>
<dbReference type="DIP" id="DIP-12624N"/>
<dbReference type="FunCoup" id="P39367">
    <property type="interactions" value="112"/>
</dbReference>
<dbReference type="IntAct" id="P39367">
    <property type="interactions" value="7"/>
</dbReference>
<dbReference type="STRING" id="511145.b4306"/>
<dbReference type="PaxDb" id="511145-b4306"/>
<dbReference type="EnsemblBacteria" id="AAC77262">
    <property type="protein sequence ID" value="AAC77262"/>
    <property type="gene ID" value="b4306"/>
</dbReference>
<dbReference type="GeneID" id="946851"/>
<dbReference type="KEGG" id="ecj:JW4268"/>
<dbReference type="KEGG" id="eco:b4306"/>
<dbReference type="KEGG" id="ecoc:C3026_23235"/>
<dbReference type="PATRIC" id="fig|1411691.4.peg.2390"/>
<dbReference type="EchoBASE" id="EB2446"/>
<dbReference type="eggNOG" id="COG2519">
    <property type="taxonomic scope" value="Bacteria"/>
</dbReference>
<dbReference type="HOGENOM" id="CLU_037315_0_0_6"/>
<dbReference type="InParanoid" id="P39367"/>
<dbReference type="OMA" id="QDSWDRY"/>
<dbReference type="OrthoDB" id="9792690at2"/>
<dbReference type="PhylomeDB" id="P39367"/>
<dbReference type="BioCyc" id="EcoCyc:G7916-MONOMER"/>
<dbReference type="EvolutionaryTrace" id="P39367"/>
<dbReference type="PRO" id="PR:P39367"/>
<dbReference type="Proteomes" id="UP000000625">
    <property type="component" value="Chromosome"/>
</dbReference>
<dbReference type="GO" id="GO:0016020">
    <property type="term" value="C:membrane"/>
    <property type="evidence" value="ECO:0007669"/>
    <property type="project" value="UniProtKB-SubCell"/>
</dbReference>
<dbReference type="GO" id="GO:0008168">
    <property type="term" value="F:methyltransferase activity"/>
    <property type="evidence" value="ECO:0000318"/>
    <property type="project" value="GO_Central"/>
</dbReference>
<dbReference type="CDD" id="cd02440">
    <property type="entry name" value="AdoMet_MTases"/>
    <property type="match status" value="1"/>
</dbReference>
<dbReference type="Gene3D" id="3.40.50.150">
    <property type="entry name" value="Vaccinia Virus protein VP39"/>
    <property type="match status" value="1"/>
</dbReference>
<dbReference type="InterPro" id="IPR025714">
    <property type="entry name" value="Methyltranfer_dom"/>
</dbReference>
<dbReference type="InterPro" id="IPR017031">
    <property type="entry name" value="Pre_MeTrfase_YjhP"/>
</dbReference>
<dbReference type="InterPro" id="IPR029063">
    <property type="entry name" value="SAM-dependent_MTases_sf"/>
</dbReference>
<dbReference type="PANTHER" id="PTHR43464">
    <property type="entry name" value="METHYLTRANSFERASE"/>
    <property type="match status" value="1"/>
</dbReference>
<dbReference type="PANTHER" id="PTHR43464:SF3">
    <property type="entry name" value="SAM-DEPENDENT METHYLTRANSFERASE"/>
    <property type="match status" value="1"/>
</dbReference>
<dbReference type="Pfam" id="PF13847">
    <property type="entry name" value="Methyltransf_31"/>
    <property type="match status" value="1"/>
</dbReference>
<dbReference type="PIRSF" id="PIRSF034653">
    <property type="entry name" value="Mtase_yjhp_prd"/>
    <property type="match status" value="1"/>
</dbReference>
<dbReference type="SUPFAM" id="SSF53335">
    <property type="entry name" value="S-adenosyl-L-methionine-dependent methyltransferases"/>
    <property type="match status" value="1"/>
</dbReference>
<name>YJHP_ECOLI</name>
<proteinExistence type="evidence at protein level"/>
<accession>P39367</accession>
<accession>Q2M608</accession>
<organism>
    <name type="scientific">Escherichia coli (strain K12)</name>
    <dbReference type="NCBI Taxonomy" id="83333"/>
    <lineage>
        <taxon>Bacteria</taxon>
        <taxon>Pseudomonadati</taxon>
        <taxon>Pseudomonadota</taxon>
        <taxon>Gammaproteobacteria</taxon>
        <taxon>Enterobacterales</taxon>
        <taxon>Enterobacteriaceae</taxon>
        <taxon>Escherichia</taxon>
    </lineage>
</organism>
<gene>
    <name type="primary">yjhP</name>
    <name type="ordered locus">b4306</name>
    <name type="ordered locus">JW4268</name>
</gene>
<protein>
    <recommendedName>
        <fullName>Uncharacterized protein YjhP</fullName>
    </recommendedName>
</protein>
<feature type="chain" id="PRO_0000169783" description="Uncharacterized protein YjhP">
    <location>
        <begin position="1"/>
        <end position="248"/>
    </location>
</feature>
<feature type="transmembrane region" description="Helical" evidence="1">
    <location>
        <begin position="104"/>
        <end position="122"/>
    </location>
</feature>
<feature type="helix" evidence="3">
    <location>
        <begin position="6"/>
        <end position="10"/>
    </location>
</feature>
<feature type="strand" evidence="3">
    <location>
        <begin position="15"/>
        <end position="19"/>
    </location>
</feature>
<feature type="helix" evidence="3">
    <location>
        <begin position="22"/>
        <end position="31"/>
    </location>
</feature>
<feature type="strand" evidence="3">
    <location>
        <begin position="39"/>
        <end position="44"/>
    </location>
</feature>
<feature type="helix" evidence="3">
    <location>
        <begin position="49"/>
        <end position="57"/>
    </location>
</feature>
<feature type="strand" evidence="3">
    <location>
        <begin position="61"/>
        <end position="67"/>
    </location>
</feature>
<feature type="helix" evidence="3">
    <location>
        <begin position="69"/>
        <end position="81"/>
    </location>
</feature>
<feature type="turn" evidence="3">
    <location>
        <begin position="85"/>
        <end position="87"/>
    </location>
</feature>
<feature type="strand" evidence="3">
    <location>
        <begin position="88"/>
        <end position="93"/>
    </location>
</feature>
<feature type="strand" evidence="3">
    <location>
        <begin position="104"/>
        <end position="111"/>
    </location>
</feature>
<feature type="helix" evidence="3">
    <location>
        <begin position="113"/>
        <end position="115"/>
    </location>
</feature>
<feature type="strand" evidence="3">
    <location>
        <begin position="117"/>
        <end position="119"/>
    </location>
</feature>
<feature type="helix" evidence="3">
    <location>
        <begin position="120"/>
        <end position="126"/>
    </location>
</feature>
<feature type="strand" evidence="3">
    <location>
        <begin position="129"/>
        <end position="143"/>
    </location>
</feature>
<feature type="helix" evidence="3">
    <location>
        <begin position="150"/>
        <end position="154"/>
    </location>
</feature>
<feature type="turn" evidence="3">
    <location>
        <begin position="155"/>
        <end position="157"/>
    </location>
</feature>
<feature type="helix" evidence="3">
    <location>
        <begin position="161"/>
        <end position="163"/>
    </location>
</feature>
<feature type="helix" evidence="3">
    <location>
        <begin position="167"/>
        <end position="175"/>
    </location>
</feature>
<feature type="turn" evidence="3">
    <location>
        <begin position="176"/>
        <end position="178"/>
    </location>
</feature>
<feature type="strand" evidence="3">
    <location>
        <begin position="183"/>
        <end position="186"/>
    </location>
</feature>
<feature type="helix" evidence="3">
    <location>
        <begin position="189"/>
        <end position="207"/>
    </location>
</feature>
<feature type="helix" evidence="3">
    <location>
        <begin position="216"/>
        <end position="232"/>
    </location>
</feature>
<feature type="helix" evidence="3">
    <location>
        <begin position="234"/>
        <end position="237"/>
    </location>
</feature>
<feature type="strand" evidence="3">
    <location>
        <begin position="238"/>
        <end position="245"/>
    </location>
</feature>
<reference key="1">
    <citation type="journal article" date="1995" name="Nucleic Acids Res.">
        <title>Analysis of the Escherichia coli genome VI: DNA sequence of the region from 92.8 through 100 minutes.</title>
        <authorList>
            <person name="Burland V.D."/>
            <person name="Plunkett G. III"/>
            <person name="Sofia H.J."/>
            <person name="Daniels D.L."/>
            <person name="Blattner F.R."/>
        </authorList>
    </citation>
    <scope>NUCLEOTIDE SEQUENCE [LARGE SCALE GENOMIC DNA]</scope>
    <source>
        <strain>K12 / MG1655 / ATCC 47076</strain>
    </source>
</reference>
<reference key="2">
    <citation type="journal article" date="1997" name="Science">
        <title>The complete genome sequence of Escherichia coli K-12.</title>
        <authorList>
            <person name="Blattner F.R."/>
            <person name="Plunkett G. III"/>
            <person name="Bloch C.A."/>
            <person name="Perna N.T."/>
            <person name="Burland V."/>
            <person name="Riley M."/>
            <person name="Collado-Vides J."/>
            <person name="Glasner J.D."/>
            <person name="Rode C.K."/>
            <person name="Mayhew G.F."/>
            <person name="Gregor J."/>
            <person name="Davis N.W."/>
            <person name="Kirkpatrick H.A."/>
            <person name="Goeden M.A."/>
            <person name="Rose D.J."/>
            <person name="Mau B."/>
            <person name="Shao Y."/>
        </authorList>
    </citation>
    <scope>NUCLEOTIDE SEQUENCE [LARGE SCALE GENOMIC DNA]</scope>
    <source>
        <strain>K12 / MG1655 / ATCC 47076</strain>
    </source>
</reference>
<reference key="3">
    <citation type="journal article" date="2006" name="Mol. Syst. Biol.">
        <title>Highly accurate genome sequences of Escherichia coli K-12 strains MG1655 and W3110.</title>
        <authorList>
            <person name="Hayashi K."/>
            <person name="Morooka N."/>
            <person name="Yamamoto Y."/>
            <person name="Fujita K."/>
            <person name="Isono K."/>
            <person name="Choi S."/>
            <person name="Ohtsubo E."/>
            <person name="Baba T."/>
            <person name="Wanner B.L."/>
            <person name="Mori H."/>
            <person name="Horiuchi T."/>
        </authorList>
    </citation>
    <scope>NUCLEOTIDE SEQUENCE [LARGE SCALE GENOMIC DNA]</scope>
    <source>
        <strain>K12 / W3110 / ATCC 27325 / DSM 5911</strain>
    </source>
</reference>
<reference key="4">
    <citation type="submission" date="2005-01" db="PDB data bank">
        <title>X-ray structure of yjhP from E.coli northeast structural genomics research consortium (NESG) target ER13.</title>
        <authorList>
            <consortium name="Northeast structural genomics consortium (NESG)"/>
        </authorList>
    </citation>
    <scope>X-RAY CRYSTALLOGRAPHY (2.9 ANGSTROMS) OF 1-248</scope>
</reference>